<proteinExistence type="inferred from homology"/>
<dbReference type="EC" id="1.-.-.-" evidence="1"/>
<dbReference type="EMBL" id="MF990003">
    <property type="protein sequence ID" value="AVK70104.1"/>
    <property type="molecule type" value="Genomic_DNA"/>
</dbReference>
<dbReference type="EMBL" id="MH388470">
    <property type="protein sequence ID" value="QBC75444.1"/>
    <property type="molecule type" value="Genomic_DNA"/>
</dbReference>
<dbReference type="SMR" id="A0A2P1DP82"/>
<dbReference type="UniPathway" id="UPA00213"/>
<dbReference type="GO" id="GO:0016491">
    <property type="term" value="F:oxidoreductase activity"/>
    <property type="evidence" value="ECO:0007669"/>
    <property type="project" value="UniProtKB-KW"/>
</dbReference>
<dbReference type="GO" id="GO:0016114">
    <property type="term" value="P:terpenoid biosynthetic process"/>
    <property type="evidence" value="ECO:0007669"/>
    <property type="project" value="UniProtKB-UniPathway"/>
</dbReference>
<dbReference type="CDD" id="cd02208">
    <property type="entry name" value="cupin_RmlC-like"/>
    <property type="match status" value="1"/>
</dbReference>
<dbReference type="Gene3D" id="2.60.120.10">
    <property type="entry name" value="Jelly Rolls"/>
    <property type="match status" value="1"/>
</dbReference>
<dbReference type="InterPro" id="IPR014710">
    <property type="entry name" value="RmlC-like_jellyroll"/>
</dbReference>
<dbReference type="InterPro" id="IPR011051">
    <property type="entry name" value="RmlC_Cupin_sf"/>
</dbReference>
<dbReference type="SUPFAM" id="SSF51182">
    <property type="entry name" value="RmlC-like cupins"/>
    <property type="match status" value="1"/>
</dbReference>
<gene>
    <name evidence="3" type="primary">macE</name>
</gene>
<protein>
    <recommendedName>
        <fullName evidence="3">Oxidoreductase macE</fullName>
        <ecNumber evidence="1">1.-.-.-</ecNumber>
    </recommendedName>
    <alternativeName>
        <fullName evidence="3">Macrophorins biosynthesis cluster protein E</fullName>
    </alternativeName>
</protein>
<comment type="function">
    <text evidence="1 2">Oxidoreductase; part of the gene cluster that mediates the biosynthesis of macrophorins, isoprenoid epoxycyclohexenones containing cyclized drimane moieties (PubMed:28926261). The first step of the pathway is the synthesis of 6-methylsalicylic acid (6-MSA) by the polyketide synthase macA (PubMed:28926261). 6-MSA is then converted to m-cresol by the decarboxylase macB (By similarity). The cytochrome P450 monooxygenase macC then catalyzes the oxidation of m-cresol to toluquinol (By similarity). Epoxidation of toluquinol is then performed by the short chain dehydrogenase macD, with the help of macE, and a further prenylation by macG leads to 7-deacetoxyyanuthone A (By similarity). The next step is the hydroxylation of C-22 of 7-deacetoxyyanuthone A by the cytochrome P450 monooxygenase macH to yield 22-deacetylyanuthone A (By similarity). O-Mevalon transferase macI then attaches mevalon to the hydroxyl group of 22-deacetylyanuthone A to produce yanuthone E (By similarity). The terpene cyclase macJ catalyzes the cyclization of 22-deacetylyanuthone A to macrophorin A (PubMed:28926261). MacJ is also able to catalyze cyclization of yanuthone E and 7-deacetoxyyanuthone A to their corresponding macrophorins (PubMed:28926261). The macJ products can be further modified by macH and macJ, as well as by the FAD-dependent monooxygenase macF, to produce additional macrophorins, including 4'-oxomacrophorin A, 4'-oxomacrophorin D and 4'-oxomacrophorin E (PubMed:28926261).</text>
</comment>
<comment type="pathway">
    <text evidence="2">Secondary metabolite biosynthesis; terpenoid biosynthesis.</text>
</comment>
<comment type="miscellaneous">
    <text evidence="2">The macrophorins cluster contains a single gene insertion (encoding for the terpene cyclase macJ) compared with the yanuthone cluster that produces the linear compound yanuthone.</text>
</comment>
<comment type="similarity">
    <text evidence="4">Belongs to the oxidoreductase OpS7 family.</text>
</comment>
<keyword id="KW-0560">Oxidoreductase</keyword>
<organism>
    <name type="scientific">Penicillium terrestre</name>
    <dbReference type="NCBI Taxonomy" id="374132"/>
    <lineage>
        <taxon>Eukaryota</taxon>
        <taxon>Fungi</taxon>
        <taxon>Dikarya</taxon>
        <taxon>Ascomycota</taxon>
        <taxon>Pezizomycotina</taxon>
        <taxon>Eurotiomycetes</taxon>
        <taxon>Eurotiomycetidae</taxon>
        <taxon>Eurotiales</taxon>
        <taxon>Aspergillaceae</taxon>
        <taxon>Penicillium</taxon>
    </lineage>
</organism>
<feature type="chain" id="PRO_0000454089" description="Oxidoreductase macE">
    <location>
        <begin position="1"/>
        <end position="260"/>
    </location>
</feature>
<evidence type="ECO:0000250" key="1">
    <source>
        <dbReference type="UniProtKB" id="G3Y423"/>
    </source>
</evidence>
<evidence type="ECO:0000269" key="2">
    <source>
    </source>
</evidence>
<evidence type="ECO:0000303" key="3">
    <source>
    </source>
</evidence>
<evidence type="ECO:0000305" key="4"/>
<sequence>MAPCKPRTFTAGQDPLTKFDGAISVRNLPRPPDRLFLFHGIMRPSRGIYAKLIATGQKPPTHFHPSQWEFFRVLRGNLTIDFNGRAIHRTASDGELAVPPYTHHVIYGTPGTEMNEVEFVVSASDPAAEEQGATVMDQPFFENWYGYQEDVFQRGEKLDFIQVLSMFDAGGTYLSPPWWVPFRSWVGLFLGIVVGRWIGGLLGYAPFYPEWTTDWEAACETMQQSWFQRRFADPQAQERAREKFRGQLEQEASAKGGKSE</sequence>
<reference key="1">
    <citation type="journal article" date="2017" name="Org. Lett.">
        <title>Late-stage terpene cyclization by an integral membrane cyclase in the biosynthesis of isoprenoid epoxycyclohexenone natural products.</title>
        <authorList>
            <person name="Tang M.C."/>
            <person name="Cui X."/>
            <person name="He X."/>
            <person name="Ding Z."/>
            <person name="Zhu T."/>
            <person name="Tang Y."/>
            <person name="Li D."/>
        </authorList>
    </citation>
    <scope>NUCLEOTIDE SEQUENCE [GENOMIC DNA]</scope>
    <scope>FUNCTION</scope>
    <scope>PATHWAY</scope>
    <source>
        <strain>LM2</strain>
    </source>
</reference>
<name>MACE_PENTR</name>
<accession>A0A2P1DP82</accession>